<organism>
    <name type="scientific">Mesorhizobium japonicum (strain LMG 29417 / CECT 9101 / MAFF 303099)</name>
    <name type="common">Mesorhizobium loti (strain MAFF 303099)</name>
    <dbReference type="NCBI Taxonomy" id="266835"/>
    <lineage>
        <taxon>Bacteria</taxon>
        <taxon>Pseudomonadati</taxon>
        <taxon>Pseudomonadota</taxon>
        <taxon>Alphaproteobacteria</taxon>
        <taxon>Hyphomicrobiales</taxon>
        <taxon>Phyllobacteriaceae</taxon>
        <taxon>Mesorhizobium</taxon>
    </lineage>
</organism>
<proteinExistence type="inferred from homology"/>
<reference key="1">
    <citation type="journal article" date="2000" name="DNA Res.">
        <title>Complete genome structure of the nitrogen-fixing symbiotic bacterium Mesorhizobium loti.</title>
        <authorList>
            <person name="Kaneko T."/>
            <person name="Nakamura Y."/>
            <person name="Sato S."/>
            <person name="Asamizu E."/>
            <person name="Kato T."/>
            <person name="Sasamoto S."/>
            <person name="Watanabe A."/>
            <person name="Idesawa K."/>
            <person name="Ishikawa A."/>
            <person name="Kawashima K."/>
            <person name="Kimura T."/>
            <person name="Kishida Y."/>
            <person name="Kiyokawa C."/>
            <person name="Kohara M."/>
            <person name="Matsumoto M."/>
            <person name="Matsuno A."/>
            <person name="Mochizuki Y."/>
            <person name="Nakayama S."/>
            <person name="Nakazaki N."/>
            <person name="Shimpo S."/>
            <person name="Sugimoto M."/>
            <person name="Takeuchi C."/>
            <person name="Yamada M."/>
            <person name="Tabata S."/>
        </authorList>
    </citation>
    <scope>NUCLEOTIDE SEQUENCE [LARGE SCALE GENOMIC DNA]</scope>
    <source>
        <strain>LMG 29417 / CECT 9101 / MAFF 303099</strain>
    </source>
</reference>
<protein>
    <recommendedName>
        <fullName evidence="1">Integration host factor subunit beta</fullName>
        <shortName evidence="1">IHF-beta</shortName>
    </recommendedName>
</protein>
<comment type="function">
    <text evidence="1">This protein is one of the two subunits of integration host factor, a specific DNA-binding protein that functions in genetic recombination as well as in transcriptional and translational control.</text>
</comment>
<comment type="subunit">
    <text evidence="1">Heterodimer of an alpha and a beta chain.</text>
</comment>
<comment type="similarity">
    <text evidence="1">Belongs to the bacterial histone-like protein family.</text>
</comment>
<name>IHFB_RHILO</name>
<keyword id="KW-0233">DNA recombination</keyword>
<keyword id="KW-0238">DNA-binding</keyword>
<keyword id="KW-0804">Transcription</keyword>
<keyword id="KW-0805">Transcription regulation</keyword>
<keyword id="KW-0810">Translation regulation</keyword>
<sequence length="94" mass="10624">MIKSELVQIIATRNPHLFLRDVENIVGAIFDEITDALAEGNRVELRGFGAFSVKNRPARTGRNPRTGESVEVEEKWVPFFKTGKELRERLNGGK</sequence>
<dbReference type="EMBL" id="BA000012">
    <property type="protein sequence ID" value="BAB50146.1"/>
    <property type="molecule type" value="Genomic_DNA"/>
</dbReference>
<dbReference type="RefSeq" id="WP_006200394.1">
    <property type="nucleotide sequence ID" value="NC_002678.2"/>
</dbReference>
<dbReference type="SMR" id="Q98GS0"/>
<dbReference type="KEGG" id="mlo:msr3202"/>
<dbReference type="eggNOG" id="COG0776">
    <property type="taxonomic scope" value="Bacteria"/>
</dbReference>
<dbReference type="HOGENOM" id="CLU_105066_2_0_5"/>
<dbReference type="Proteomes" id="UP000000552">
    <property type="component" value="Chromosome"/>
</dbReference>
<dbReference type="GO" id="GO:0005694">
    <property type="term" value="C:chromosome"/>
    <property type="evidence" value="ECO:0007669"/>
    <property type="project" value="InterPro"/>
</dbReference>
<dbReference type="GO" id="GO:0005829">
    <property type="term" value="C:cytosol"/>
    <property type="evidence" value="ECO:0007669"/>
    <property type="project" value="TreeGrafter"/>
</dbReference>
<dbReference type="GO" id="GO:0003677">
    <property type="term" value="F:DNA binding"/>
    <property type="evidence" value="ECO:0007669"/>
    <property type="project" value="UniProtKB-UniRule"/>
</dbReference>
<dbReference type="GO" id="GO:0030527">
    <property type="term" value="F:structural constituent of chromatin"/>
    <property type="evidence" value="ECO:0007669"/>
    <property type="project" value="InterPro"/>
</dbReference>
<dbReference type="GO" id="GO:0006310">
    <property type="term" value="P:DNA recombination"/>
    <property type="evidence" value="ECO:0007669"/>
    <property type="project" value="UniProtKB-UniRule"/>
</dbReference>
<dbReference type="GO" id="GO:0006355">
    <property type="term" value="P:regulation of DNA-templated transcription"/>
    <property type="evidence" value="ECO:0007669"/>
    <property type="project" value="UniProtKB-UniRule"/>
</dbReference>
<dbReference type="GO" id="GO:0006417">
    <property type="term" value="P:regulation of translation"/>
    <property type="evidence" value="ECO:0007669"/>
    <property type="project" value="UniProtKB-UniRule"/>
</dbReference>
<dbReference type="CDD" id="cd13836">
    <property type="entry name" value="IHF_B"/>
    <property type="match status" value="1"/>
</dbReference>
<dbReference type="Gene3D" id="4.10.520.10">
    <property type="entry name" value="IHF-like DNA-binding proteins"/>
    <property type="match status" value="1"/>
</dbReference>
<dbReference type="HAMAP" id="MF_00381">
    <property type="entry name" value="IHF_beta"/>
    <property type="match status" value="1"/>
</dbReference>
<dbReference type="InterPro" id="IPR000119">
    <property type="entry name" value="Hist_DNA-bd"/>
</dbReference>
<dbReference type="InterPro" id="IPR020816">
    <property type="entry name" value="Histone-like_DNA-bd_CS"/>
</dbReference>
<dbReference type="InterPro" id="IPR010992">
    <property type="entry name" value="IHF-like_DNA-bd_dom_sf"/>
</dbReference>
<dbReference type="InterPro" id="IPR005685">
    <property type="entry name" value="IHF_beta"/>
</dbReference>
<dbReference type="NCBIfam" id="TIGR00988">
    <property type="entry name" value="hip"/>
    <property type="match status" value="1"/>
</dbReference>
<dbReference type="NCBIfam" id="NF001222">
    <property type="entry name" value="PRK00199.1"/>
    <property type="match status" value="1"/>
</dbReference>
<dbReference type="PANTHER" id="PTHR33175">
    <property type="entry name" value="DNA-BINDING PROTEIN HU"/>
    <property type="match status" value="1"/>
</dbReference>
<dbReference type="PANTHER" id="PTHR33175:SF5">
    <property type="entry name" value="INTEGRATION HOST FACTOR SUBUNIT BETA"/>
    <property type="match status" value="1"/>
</dbReference>
<dbReference type="Pfam" id="PF00216">
    <property type="entry name" value="Bac_DNA_binding"/>
    <property type="match status" value="1"/>
</dbReference>
<dbReference type="PRINTS" id="PR01727">
    <property type="entry name" value="DNABINDINGHU"/>
</dbReference>
<dbReference type="SMART" id="SM00411">
    <property type="entry name" value="BHL"/>
    <property type="match status" value="1"/>
</dbReference>
<dbReference type="SUPFAM" id="SSF47729">
    <property type="entry name" value="IHF-like DNA-binding proteins"/>
    <property type="match status" value="1"/>
</dbReference>
<dbReference type="PROSITE" id="PS00045">
    <property type="entry name" value="HISTONE_LIKE"/>
    <property type="match status" value="1"/>
</dbReference>
<gene>
    <name evidence="1" type="primary">ihfB</name>
    <name evidence="1" type="synonym">himD</name>
    <name type="ordered locus">msr3202</name>
</gene>
<accession>Q98GS0</accession>
<feature type="chain" id="PRO_0000105065" description="Integration host factor subunit beta">
    <location>
        <begin position="1"/>
        <end position="94"/>
    </location>
</feature>
<evidence type="ECO:0000255" key="1">
    <source>
        <dbReference type="HAMAP-Rule" id="MF_00381"/>
    </source>
</evidence>